<sequence length="363" mass="42245">MNGSPTPKRYSSKSSRLYDDYYNIPYQYSNPTPMNRDYNDVGSRINADKLVPEEYKRNTEFINKAVQQNKELNFKLREKQNEIFELKKIAETLRSKLEKYVDITKKLEDQNLNLQIKISDLEKKLSDANSTFKEMRFPKVKDPMVDDDPVSENYDQINVPKHRAPDATGNPRTTNKVSNTSDQDSRLKAIERTLSVLTNYVMRSEDGNNDRMSPLPSPLNTISPINNRLNFQEPKRYNPTVKVNPSDDDIMMYESAELKRVEEEIEELKRKILVRKKHDLRKLSLNNQLQELQSMMDGDDNIKLDNVSKHNHATHRHSSQSSRDYSPSSDACLECSNDLYEKNRVKPENNMSETFATPTPNNR</sequence>
<name>SPC42_YEAS1</name>
<proteinExistence type="inferred from homology"/>
<gene>
    <name type="primary">SPC42</name>
    <name type="ORF">SCRG_03977</name>
</gene>
<accession>B3LR46</accession>
<protein>
    <recommendedName>
        <fullName>Spindle pole body component SPC42</fullName>
    </recommendedName>
</protein>
<evidence type="ECO:0000250" key="1"/>
<evidence type="ECO:0000250" key="2">
    <source>
        <dbReference type="UniProtKB" id="P36094"/>
    </source>
</evidence>
<evidence type="ECO:0000255" key="3"/>
<evidence type="ECO:0000256" key="4">
    <source>
        <dbReference type="SAM" id="MobiDB-lite"/>
    </source>
</evidence>
<evidence type="ECO:0000305" key="5"/>
<organism>
    <name type="scientific">Saccharomyces cerevisiae (strain RM11-1a)</name>
    <name type="common">Baker's yeast</name>
    <dbReference type="NCBI Taxonomy" id="285006"/>
    <lineage>
        <taxon>Eukaryota</taxon>
        <taxon>Fungi</taxon>
        <taxon>Dikarya</taxon>
        <taxon>Ascomycota</taxon>
        <taxon>Saccharomycotina</taxon>
        <taxon>Saccharomycetes</taxon>
        <taxon>Saccharomycetales</taxon>
        <taxon>Saccharomycetaceae</taxon>
        <taxon>Saccharomyces</taxon>
    </lineage>
</organism>
<reference key="1">
    <citation type="submission" date="2005-03" db="EMBL/GenBank/DDBJ databases">
        <title>Annotation of the Saccharomyces cerevisiae RM11-1a genome.</title>
        <authorList>
            <consortium name="The Broad Institute Genome Sequencing Platform"/>
            <person name="Birren B.W."/>
            <person name="Lander E.S."/>
            <person name="Galagan J.E."/>
            <person name="Nusbaum C."/>
            <person name="Devon K."/>
            <person name="Cuomo C."/>
            <person name="Jaffe D.B."/>
            <person name="Butler J."/>
            <person name="Alvarez P."/>
            <person name="Gnerre S."/>
            <person name="Grabherr M."/>
            <person name="Kleber M."/>
            <person name="Mauceli E.W."/>
            <person name="Brockman W."/>
            <person name="MacCallum I.A."/>
            <person name="Rounsley S."/>
            <person name="Young S.K."/>
            <person name="LaButti K."/>
            <person name="Pushparaj V."/>
            <person name="DeCaprio D."/>
            <person name="Crawford M."/>
            <person name="Koehrsen M."/>
            <person name="Engels R."/>
            <person name="Montgomery P."/>
            <person name="Pearson M."/>
            <person name="Howarth C."/>
            <person name="Larson L."/>
            <person name="Luoma S."/>
            <person name="White J."/>
            <person name="O'Leary S."/>
            <person name="Kodira C.D."/>
            <person name="Zeng Q."/>
            <person name="Yandava C."/>
            <person name="Alvarado L."/>
            <person name="Pratt S."/>
            <person name="Kruglyak L."/>
        </authorList>
    </citation>
    <scope>NUCLEOTIDE SEQUENCE [LARGE SCALE GENOMIC DNA]</scope>
    <source>
        <strain>RM11-1a</strain>
    </source>
</reference>
<keyword id="KW-0175">Coiled coil</keyword>
<keyword id="KW-0963">Cytoplasm</keyword>
<keyword id="KW-0206">Cytoskeleton</keyword>
<keyword id="KW-0539">Nucleus</keyword>
<keyword id="KW-0597">Phosphoprotein</keyword>
<feature type="chain" id="PRO_0000409212" description="Spindle pole body component SPC42">
    <location>
        <begin position="1"/>
        <end position="363"/>
    </location>
</feature>
<feature type="region of interest" description="Disordered" evidence="4">
    <location>
        <begin position="160"/>
        <end position="184"/>
    </location>
</feature>
<feature type="region of interest" description="Disordered" evidence="4">
    <location>
        <begin position="310"/>
        <end position="363"/>
    </location>
</feature>
<feature type="coiled-coil region" evidence="3">
    <location>
        <begin position="62"/>
        <end position="136"/>
    </location>
</feature>
<feature type="coiled-coil region" evidence="3">
    <location>
        <begin position="248"/>
        <end position="297"/>
    </location>
</feature>
<feature type="compositionally biased region" description="Polar residues" evidence="4">
    <location>
        <begin position="170"/>
        <end position="182"/>
    </location>
</feature>
<feature type="compositionally biased region" description="Low complexity" evidence="4">
    <location>
        <begin position="319"/>
        <end position="329"/>
    </location>
</feature>
<feature type="compositionally biased region" description="Polar residues" evidence="4">
    <location>
        <begin position="349"/>
        <end position="363"/>
    </location>
</feature>
<feature type="modified residue" description="Phosphoserine" evidence="2">
    <location>
        <position position="213"/>
    </location>
</feature>
<feature type="modified residue" description="Phosphoserine" evidence="2">
    <location>
        <position position="217"/>
    </location>
</feature>
<feature type="modified residue" description="Phosphoserine" evidence="2">
    <location>
        <position position="284"/>
    </location>
</feature>
<feature type="modified residue" description="Phosphoserine" evidence="2">
    <location>
        <position position="329"/>
    </location>
</feature>
<comment type="function">
    <text evidence="1">Forms a polymeric layer at the periphery of the spindle pole body (SPB) central plaque which has an essential function during SPB duplication and may facilitate attachment of the SPB to the nuclear membrane.</text>
</comment>
<comment type="subunit">
    <text evidence="1">Component of the SPC110 complex containing at least CMD1, SPC29, SPC42 and SCP110.</text>
</comment>
<comment type="subcellular location">
    <subcellularLocation>
        <location evidence="1">Nucleus</location>
    </subcellularLocation>
    <subcellularLocation>
        <location evidence="1">Cytoplasm</location>
        <location evidence="1">Cytoskeleton</location>
        <location evidence="1">Microtubule organizing center</location>
        <location evidence="1">Spindle pole body</location>
    </subcellularLocation>
</comment>
<comment type="similarity">
    <text evidence="5">Belongs to the SPC42 family.</text>
</comment>
<dbReference type="EMBL" id="CH408051">
    <property type="protein sequence ID" value="EDV13049.1"/>
    <property type="molecule type" value="Genomic_DNA"/>
</dbReference>
<dbReference type="SMR" id="B3LR46"/>
<dbReference type="HOGENOM" id="CLU_056211_1_0_1"/>
<dbReference type="OrthoDB" id="33113at4893"/>
<dbReference type="Proteomes" id="UP000008335">
    <property type="component" value="Unassembled WGS sequence"/>
</dbReference>
<dbReference type="GO" id="GO:0005737">
    <property type="term" value="C:cytoplasm"/>
    <property type="evidence" value="ECO:0007669"/>
    <property type="project" value="UniProtKB-KW"/>
</dbReference>
<dbReference type="GO" id="GO:0005634">
    <property type="term" value="C:nucleus"/>
    <property type="evidence" value="ECO:0007669"/>
    <property type="project" value="UniProtKB-SubCell"/>
</dbReference>
<dbReference type="GO" id="GO:0005816">
    <property type="term" value="C:spindle pole body"/>
    <property type="evidence" value="ECO:0007669"/>
    <property type="project" value="UniProtKB-SubCell"/>
</dbReference>
<dbReference type="Gene3D" id="1.20.5.1180">
    <property type="entry name" value="Geminin coiled-coil domain"/>
    <property type="match status" value="1"/>
</dbReference>
<dbReference type="InterPro" id="IPR021611">
    <property type="entry name" value="Spc42"/>
</dbReference>
<dbReference type="Pfam" id="PF11544">
    <property type="entry name" value="Spc42p"/>
    <property type="match status" value="1"/>
</dbReference>